<accession>Q8TU02</accession>
<evidence type="ECO:0000255" key="1">
    <source>
        <dbReference type="HAMAP-Rule" id="MF_01094"/>
    </source>
</evidence>
<reference key="1">
    <citation type="journal article" date="2002" name="Genome Res.">
        <title>The genome of Methanosarcina acetivorans reveals extensive metabolic and physiological diversity.</title>
        <authorList>
            <person name="Galagan J.E."/>
            <person name="Nusbaum C."/>
            <person name="Roy A."/>
            <person name="Endrizzi M.G."/>
            <person name="Macdonald P."/>
            <person name="FitzHugh W."/>
            <person name="Calvo S."/>
            <person name="Engels R."/>
            <person name="Smirnov S."/>
            <person name="Atnoor D."/>
            <person name="Brown A."/>
            <person name="Allen N."/>
            <person name="Naylor J."/>
            <person name="Stange-Thomann N."/>
            <person name="DeArellano K."/>
            <person name="Johnson R."/>
            <person name="Linton L."/>
            <person name="McEwan P."/>
            <person name="McKernan K."/>
            <person name="Talamas J."/>
            <person name="Tirrell A."/>
            <person name="Ye W."/>
            <person name="Zimmer A."/>
            <person name="Barber R.D."/>
            <person name="Cann I."/>
            <person name="Graham D.E."/>
            <person name="Grahame D.A."/>
            <person name="Guss A.M."/>
            <person name="Hedderich R."/>
            <person name="Ingram-Smith C."/>
            <person name="Kuettner H.C."/>
            <person name="Krzycki J.A."/>
            <person name="Leigh J.A."/>
            <person name="Li W."/>
            <person name="Liu J."/>
            <person name="Mukhopadhyay B."/>
            <person name="Reeve J.N."/>
            <person name="Smith K."/>
            <person name="Springer T.A."/>
            <person name="Umayam L.A."/>
            <person name="White O."/>
            <person name="White R.H."/>
            <person name="de Macario E.C."/>
            <person name="Ferry J.G."/>
            <person name="Jarrell K.F."/>
            <person name="Jing H."/>
            <person name="Macario A.J.L."/>
            <person name="Paulsen I.T."/>
            <person name="Pritchett M."/>
            <person name="Sowers K.R."/>
            <person name="Swanson R.V."/>
            <person name="Zinder S.H."/>
            <person name="Lander E."/>
            <person name="Metcalf W.W."/>
            <person name="Birren B."/>
        </authorList>
    </citation>
    <scope>NUCLEOTIDE SEQUENCE [LARGE SCALE GENOMIC DNA]</scope>
    <source>
        <strain>ATCC 35395 / DSM 2834 / JCM 12185 / C2A</strain>
    </source>
</reference>
<protein>
    <recommendedName>
        <fullName evidence="1">Tetrahydromethanopterin S-methyltransferase subunit B</fullName>
        <ecNumber evidence="1">7.2.1.4</ecNumber>
    </recommendedName>
    <alternativeName>
        <fullName evidence="1">N5-methyltetrahydromethanopterin--coenzyme M methyltransferase subunit B</fullName>
    </alternativeName>
</protein>
<feature type="chain" id="PRO_0000147512" description="Tetrahydromethanopterin S-methyltransferase subunit B">
    <location>
        <begin position="1"/>
        <end position="108"/>
    </location>
</feature>
<feature type="transmembrane region" description="Helical" evidence="1">
    <location>
        <begin position="80"/>
        <end position="100"/>
    </location>
</feature>
<comment type="function">
    <text evidence="1">Part of a complex that catalyzes the formation of methyl-coenzyme M and tetrahydromethanopterin from coenzyme M and methyl-tetrahydromethanopterin. This is an energy-conserving, sodium-ion translocating step.</text>
</comment>
<comment type="catalytic activity">
    <reaction evidence="1">
        <text>5-methyl-5,6,7,8-tetrahydromethanopterin + coenzyme M + 2 Na(+)(in) = 5,6,7,8-tetrahydromethanopterin + methyl-coenzyme M + 2 Na(+)(out)</text>
        <dbReference type="Rhea" id="RHEA:53492"/>
        <dbReference type="ChEBI" id="CHEBI:29101"/>
        <dbReference type="ChEBI" id="CHEBI:58103"/>
        <dbReference type="ChEBI" id="CHEBI:58116"/>
        <dbReference type="ChEBI" id="CHEBI:58286"/>
        <dbReference type="ChEBI" id="CHEBI:58319"/>
        <dbReference type="EC" id="7.2.1.4"/>
    </reaction>
</comment>
<comment type="pathway">
    <text evidence="1">One-carbon metabolism; methanogenesis from CO(2); methyl-coenzyme M from 5,10-methylene-5,6,7,8-tetrahydromethanopterin: step 2/2.</text>
</comment>
<comment type="subunit">
    <text evidence="1">The complex is composed of 8 subunits; MtrA, MtrB, MtrC, MtrD, MtrE, MtrF, MtrG and MtrH.</text>
</comment>
<comment type="subcellular location">
    <subcellularLocation>
        <location evidence="1">Cell membrane</location>
        <topology evidence="1">Single-pass membrane protein</topology>
    </subcellularLocation>
</comment>
<comment type="similarity">
    <text evidence="1">Belongs to the MtrB family.</text>
</comment>
<proteinExistence type="inferred from homology"/>
<name>MTRB_METAC</name>
<dbReference type="EC" id="7.2.1.4" evidence="1"/>
<dbReference type="EMBL" id="AE010299">
    <property type="protein sequence ID" value="AAM03726.1"/>
    <property type="molecule type" value="Genomic_DNA"/>
</dbReference>
<dbReference type="RefSeq" id="WP_011020331.1">
    <property type="nucleotide sequence ID" value="NC_003552.1"/>
</dbReference>
<dbReference type="SMR" id="Q8TU02"/>
<dbReference type="FunCoup" id="Q8TU02">
    <property type="interactions" value="72"/>
</dbReference>
<dbReference type="STRING" id="188937.MA_0273"/>
<dbReference type="EnsemblBacteria" id="AAM03726">
    <property type="protein sequence ID" value="AAM03726"/>
    <property type="gene ID" value="MA_0273"/>
</dbReference>
<dbReference type="GeneID" id="1472165"/>
<dbReference type="KEGG" id="mac:MA_0273"/>
<dbReference type="HOGENOM" id="CLU_171544_0_0_2"/>
<dbReference type="InParanoid" id="Q8TU02"/>
<dbReference type="OrthoDB" id="114034at2157"/>
<dbReference type="UniPathway" id="UPA00640">
    <property type="reaction ID" value="UER00698"/>
</dbReference>
<dbReference type="Proteomes" id="UP000002487">
    <property type="component" value="Chromosome"/>
</dbReference>
<dbReference type="GO" id="GO:0005886">
    <property type="term" value="C:plasma membrane"/>
    <property type="evidence" value="ECO:0007669"/>
    <property type="project" value="UniProtKB-SubCell"/>
</dbReference>
<dbReference type="GO" id="GO:0030269">
    <property type="term" value="F:tetrahydromethanopterin S-methyltransferase activity"/>
    <property type="evidence" value="ECO:0007669"/>
    <property type="project" value="UniProtKB-UniRule"/>
</dbReference>
<dbReference type="GO" id="GO:0019386">
    <property type="term" value="P:methanogenesis, from carbon dioxide"/>
    <property type="evidence" value="ECO:0007669"/>
    <property type="project" value="UniProtKB-UniRule"/>
</dbReference>
<dbReference type="GO" id="GO:0032259">
    <property type="term" value="P:methylation"/>
    <property type="evidence" value="ECO:0007669"/>
    <property type="project" value="UniProtKB-KW"/>
</dbReference>
<dbReference type="GO" id="GO:0006730">
    <property type="term" value="P:one-carbon metabolic process"/>
    <property type="evidence" value="ECO:0007669"/>
    <property type="project" value="UniProtKB-UniRule"/>
</dbReference>
<dbReference type="HAMAP" id="MF_01094">
    <property type="entry name" value="MtrB"/>
    <property type="match status" value="1"/>
</dbReference>
<dbReference type="InterPro" id="IPR008690">
    <property type="entry name" value="MtrB_MeTrfase"/>
</dbReference>
<dbReference type="NCBIfam" id="TIGR04166">
    <property type="entry name" value="methano_MtrB"/>
    <property type="match status" value="1"/>
</dbReference>
<dbReference type="NCBIfam" id="NF002129">
    <property type="entry name" value="PRK00965.1"/>
    <property type="match status" value="1"/>
</dbReference>
<dbReference type="Pfam" id="PF05440">
    <property type="entry name" value="MtrB"/>
    <property type="match status" value="1"/>
</dbReference>
<dbReference type="PIRSF" id="PIRSF005518">
    <property type="entry name" value="MtrB"/>
    <property type="match status" value="1"/>
</dbReference>
<organism>
    <name type="scientific">Methanosarcina acetivorans (strain ATCC 35395 / DSM 2834 / JCM 12185 / C2A)</name>
    <dbReference type="NCBI Taxonomy" id="188937"/>
    <lineage>
        <taxon>Archaea</taxon>
        <taxon>Methanobacteriati</taxon>
        <taxon>Methanobacteriota</taxon>
        <taxon>Stenosarchaea group</taxon>
        <taxon>Methanomicrobia</taxon>
        <taxon>Methanosarcinales</taxon>
        <taxon>Methanosarcinaceae</taxon>
        <taxon>Methanosarcina</taxon>
    </lineage>
</organism>
<keyword id="KW-1003">Cell membrane</keyword>
<keyword id="KW-0472">Membrane</keyword>
<keyword id="KW-0484">Methanogenesis</keyword>
<keyword id="KW-0489">Methyltransferase</keyword>
<keyword id="KW-0554">One-carbon metabolism</keyword>
<keyword id="KW-1185">Reference proteome</keyword>
<keyword id="KW-0808">Transferase</keyword>
<keyword id="KW-1278">Translocase</keyword>
<keyword id="KW-0812">Transmembrane</keyword>
<keyword id="KW-1133">Transmembrane helix</keyword>
<gene>
    <name evidence="1" type="primary">mtrB</name>
    <name type="ordered locus">MA_0273</name>
</gene>
<sequence>MSMIRIAPEVHLVMDPDTAVVAEEREDSILYSMDPVFERMDKLDGIAEDLLNSLSPSKPLLNSWPGRENTSYMAGIYGNAFYGIVVGLAFSGLLALIIFIQRLIEGGM</sequence>